<protein>
    <recommendedName>
        <fullName evidence="1">Glutamate 5-kinase</fullName>
        <ecNumber evidence="1">2.7.2.11</ecNumber>
    </recommendedName>
    <alternativeName>
        <fullName evidence="1">Gamma-glutamyl kinase</fullName>
        <shortName evidence="1">GK</shortName>
    </alternativeName>
</protein>
<proteinExistence type="inferred from homology"/>
<comment type="function">
    <text evidence="1">Catalyzes the transfer of a phosphate group to glutamate to form L-glutamate 5-phosphate.</text>
</comment>
<comment type="catalytic activity">
    <reaction evidence="1">
        <text>L-glutamate + ATP = L-glutamyl 5-phosphate + ADP</text>
        <dbReference type="Rhea" id="RHEA:14877"/>
        <dbReference type="ChEBI" id="CHEBI:29985"/>
        <dbReference type="ChEBI" id="CHEBI:30616"/>
        <dbReference type="ChEBI" id="CHEBI:58274"/>
        <dbReference type="ChEBI" id="CHEBI:456216"/>
        <dbReference type="EC" id="2.7.2.11"/>
    </reaction>
</comment>
<comment type="pathway">
    <text evidence="1">Amino-acid biosynthesis; L-proline biosynthesis; L-glutamate 5-semialdehyde from L-glutamate: step 1/2.</text>
</comment>
<comment type="subcellular location">
    <subcellularLocation>
        <location evidence="1">Cytoplasm</location>
    </subcellularLocation>
</comment>
<comment type="similarity">
    <text evidence="1">Belongs to the glutamate 5-kinase family.</text>
</comment>
<dbReference type="EC" id="2.7.2.11" evidence="1"/>
<dbReference type="EMBL" id="CP000614">
    <property type="protein sequence ID" value="ABO53572.1"/>
    <property type="molecule type" value="Genomic_DNA"/>
</dbReference>
<dbReference type="SMR" id="A4JBB9"/>
<dbReference type="KEGG" id="bvi:Bcep1808_0560"/>
<dbReference type="eggNOG" id="COG0263">
    <property type="taxonomic scope" value="Bacteria"/>
</dbReference>
<dbReference type="HOGENOM" id="CLU_025400_2_0_4"/>
<dbReference type="UniPathway" id="UPA00098">
    <property type="reaction ID" value="UER00359"/>
</dbReference>
<dbReference type="Proteomes" id="UP000002287">
    <property type="component" value="Chromosome 1"/>
</dbReference>
<dbReference type="GO" id="GO:0005829">
    <property type="term" value="C:cytosol"/>
    <property type="evidence" value="ECO:0007669"/>
    <property type="project" value="TreeGrafter"/>
</dbReference>
<dbReference type="GO" id="GO:0005524">
    <property type="term" value="F:ATP binding"/>
    <property type="evidence" value="ECO:0007669"/>
    <property type="project" value="UniProtKB-KW"/>
</dbReference>
<dbReference type="GO" id="GO:0004349">
    <property type="term" value="F:glutamate 5-kinase activity"/>
    <property type="evidence" value="ECO:0007669"/>
    <property type="project" value="UniProtKB-UniRule"/>
</dbReference>
<dbReference type="GO" id="GO:0003723">
    <property type="term" value="F:RNA binding"/>
    <property type="evidence" value="ECO:0007669"/>
    <property type="project" value="InterPro"/>
</dbReference>
<dbReference type="GO" id="GO:0055129">
    <property type="term" value="P:L-proline biosynthetic process"/>
    <property type="evidence" value="ECO:0007669"/>
    <property type="project" value="UniProtKB-UniRule"/>
</dbReference>
<dbReference type="CDD" id="cd04242">
    <property type="entry name" value="AAK_G5K_ProB"/>
    <property type="match status" value="1"/>
</dbReference>
<dbReference type="CDD" id="cd21157">
    <property type="entry name" value="PUA_G5K"/>
    <property type="match status" value="1"/>
</dbReference>
<dbReference type="FunFam" id="2.30.130.10:FF:000007">
    <property type="entry name" value="Glutamate 5-kinase"/>
    <property type="match status" value="1"/>
</dbReference>
<dbReference type="FunFam" id="3.40.1160.10:FF:000018">
    <property type="entry name" value="Glutamate 5-kinase"/>
    <property type="match status" value="1"/>
</dbReference>
<dbReference type="Gene3D" id="3.40.1160.10">
    <property type="entry name" value="Acetylglutamate kinase-like"/>
    <property type="match status" value="1"/>
</dbReference>
<dbReference type="Gene3D" id="2.30.130.10">
    <property type="entry name" value="PUA domain"/>
    <property type="match status" value="1"/>
</dbReference>
<dbReference type="HAMAP" id="MF_00456">
    <property type="entry name" value="ProB"/>
    <property type="match status" value="1"/>
</dbReference>
<dbReference type="InterPro" id="IPR036393">
    <property type="entry name" value="AceGlu_kinase-like_sf"/>
</dbReference>
<dbReference type="InterPro" id="IPR001048">
    <property type="entry name" value="Asp/Glu/Uridylate_kinase"/>
</dbReference>
<dbReference type="InterPro" id="IPR041739">
    <property type="entry name" value="G5K_ProB"/>
</dbReference>
<dbReference type="InterPro" id="IPR001057">
    <property type="entry name" value="Glu/AcGlu_kinase"/>
</dbReference>
<dbReference type="InterPro" id="IPR011529">
    <property type="entry name" value="Glu_5kinase"/>
</dbReference>
<dbReference type="InterPro" id="IPR005715">
    <property type="entry name" value="Glu_5kinase/COase_Synthase"/>
</dbReference>
<dbReference type="InterPro" id="IPR019797">
    <property type="entry name" value="Glutamate_5-kinase_CS"/>
</dbReference>
<dbReference type="InterPro" id="IPR002478">
    <property type="entry name" value="PUA"/>
</dbReference>
<dbReference type="InterPro" id="IPR015947">
    <property type="entry name" value="PUA-like_sf"/>
</dbReference>
<dbReference type="InterPro" id="IPR036974">
    <property type="entry name" value="PUA_sf"/>
</dbReference>
<dbReference type="NCBIfam" id="TIGR01027">
    <property type="entry name" value="proB"/>
    <property type="match status" value="1"/>
</dbReference>
<dbReference type="PANTHER" id="PTHR43654">
    <property type="entry name" value="GLUTAMATE 5-KINASE"/>
    <property type="match status" value="1"/>
</dbReference>
<dbReference type="PANTHER" id="PTHR43654:SF1">
    <property type="entry name" value="ISOPENTENYL PHOSPHATE KINASE"/>
    <property type="match status" value="1"/>
</dbReference>
<dbReference type="Pfam" id="PF00696">
    <property type="entry name" value="AA_kinase"/>
    <property type="match status" value="1"/>
</dbReference>
<dbReference type="Pfam" id="PF01472">
    <property type="entry name" value="PUA"/>
    <property type="match status" value="1"/>
</dbReference>
<dbReference type="PIRSF" id="PIRSF000729">
    <property type="entry name" value="GK"/>
    <property type="match status" value="1"/>
</dbReference>
<dbReference type="PRINTS" id="PR00474">
    <property type="entry name" value="GLU5KINASE"/>
</dbReference>
<dbReference type="SMART" id="SM00359">
    <property type="entry name" value="PUA"/>
    <property type="match status" value="1"/>
</dbReference>
<dbReference type="SUPFAM" id="SSF53633">
    <property type="entry name" value="Carbamate kinase-like"/>
    <property type="match status" value="1"/>
</dbReference>
<dbReference type="SUPFAM" id="SSF88697">
    <property type="entry name" value="PUA domain-like"/>
    <property type="match status" value="1"/>
</dbReference>
<dbReference type="PROSITE" id="PS00902">
    <property type="entry name" value="GLUTAMATE_5_KINASE"/>
    <property type="match status" value="1"/>
</dbReference>
<dbReference type="PROSITE" id="PS50890">
    <property type="entry name" value="PUA"/>
    <property type="match status" value="1"/>
</dbReference>
<sequence length="372" mass="39435">MRSIIADSKRLVVKVGSSLVTNDGKGLDHAAIGRWAAQIAALRAQGKEVVLVSSGAIAEGMQRLGWNKRPREIDELQAAAAVGQMGLAQVYESRFTEHHIRTAQILLTHADLADRERYLNARSTLLTLLRLGVVPIINENDTVVTDEIKFGDNDTLGALVANLIEGDALIILTDQTGLFTADPRKDPNATLVAEASAGAPELESMAGGAGSSLGRGGMLTKILAAKRAAHSGANTVIASGREADVLVRLAAGEAIGTQLIARTARMAARKQWMADHLQVRGHVVIDAGAVEKLRDGGKSLLPIGVIDVQGAFARGEVIACVGPDGREVARGLTNYSSAETKLIHRKPSGEIETVLGYMLEPELIHRDNLVLV</sequence>
<evidence type="ECO:0000255" key="1">
    <source>
        <dbReference type="HAMAP-Rule" id="MF_00456"/>
    </source>
</evidence>
<keyword id="KW-0028">Amino-acid biosynthesis</keyword>
<keyword id="KW-0067">ATP-binding</keyword>
<keyword id="KW-0963">Cytoplasm</keyword>
<keyword id="KW-0418">Kinase</keyword>
<keyword id="KW-0547">Nucleotide-binding</keyword>
<keyword id="KW-0641">Proline biosynthesis</keyword>
<keyword id="KW-0808">Transferase</keyword>
<gene>
    <name evidence="1" type="primary">proB</name>
    <name type="ordered locus">Bcep1808_0560</name>
</gene>
<reference key="1">
    <citation type="submission" date="2007-03" db="EMBL/GenBank/DDBJ databases">
        <title>Complete sequence of chromosome 1 of Burkholderia vietnamiensis G4.</title>
        <authorList>
            <consortium name="US DOE Joint Genome Institute"/>
            <person name="Copeland A."/>
            <person name="Lucas S."/>
            <person name="Lapidus A."/>
            <person name="Barry K."/>
            <person name="Detter J.C."/>
            <person name="Glavina del Rio T."/>
            <person name="Hammon N."/>
            <person name="Israni S."/>
            <person name="Dalin E."/>
            <person name="Tice H."/>
            <person name="Pitluck S."/>
            <person name="Chain P."/>
            <person name="Malfatti S."/>
            <person name="Shin M."/>
            <person name="Vergez L."/>
            <person name="Schmutz J."/>
            <person name="Larimer F."/>
            <person name="Land M."/>
            <person name="Hauser L."/>
            <person name="Kyrpides N."/>
            <person name="Tiedje J."/>
            <person name="Richardson P."/>
        </authorList>
    </citation>
    <scope>NUCLEOTIDE SEQUENCE [LARGE SCALE GENOMIC DNA]</scope>
    <source>
        <strain>G4 / LMG 22486</strain>
    </source>
</reference>
<organism>
    <name type="scientific">Burkholderia vietnamiensis (strain G4 / LMG 22486)</name>
    <name type="common">Burkholderia cepacia (strain R1808)</name>
    <dbReference type="NCBI Taxonomy" id="269482"/>
    <lineage>
        <taxon>Bacteria</taxon>
        <taxon>Pseudomonadati</taxon>
        <taxon>Pseudomonadota</taxon>
        <taxon>Betaproteobacteria</taxon>
        <taxon>Burkholderiales</taxon>
        <taxon>Burkholderiaceae</taxon>
        <taxon>Burkholderia</taxon>
        <taxon>Burkholderia cepacia complex</taxon>
    </lineage>
</organism>
<feature type="chain" id="PRO_1000081047" description="Glutamate 5-kinase">
    <location>
        <begin position="1"/>
        <end position="372"/>
    </location>
</feature>
<feature type="domain" description="PUA" evidence="1">
    <location>
        <begin position="280"/>
        <end position="358"/>
    </location>
</feature>
<feature type="binding site" evidence="1">
    <location>
        <position position="14"/>
    </location>
    <ligand>
        <name>ATP</name>
        <dbReference type="ChEBI" id="CHEBI:30616"/>
    </ligand>
</feature>
<feature type="binding site" evidence="1">
    <location>
        <position position="54"/>
    </location>
    <ligand>
        <name>substrate</name>
    </ligand>
</feature>
<feature type="binding site" evidence="1">
    <location>
        <position position="141"/>
    </location>
    <ligand>
        <name>substrate</name>
    </ligand>
</feature>
<feature type="binding site" evidence="1">
    <location>
        <position position="153"/>
    </location>
    <ligand>
        <name>substrate</name>
    </ligand>
</feature>
<feature type="binding site" evidence="1">
    <location>
        <begin position="173"/>
        <end position="174"/>
    </location>
    <ligand>
        <name>ATP</name>
        <dbReference type="ChEBI" id="CHEBI:30616"/>
    </ligand>
</feature>
<accession>A4JBB9</accession>
<name>PROB_BURVG</name>